<gene>
    <name type="primary">Ugp2</name>
</gene>
<organism>
    <name type="scientific">Mus musculus</name>
    <name type="common">Mouse</name>
    <dbReference type="NCBI Taxonomy" id="10090"/>
    <lineage>
        <taxon>Eukaryota</taxon>
        <taxon>Metazoa</taxon>
        <taxon>Chordata</taxon>
        <taxon>Craniata</taxon>
        <taxon>Vertebrata</taxon>
        <taxon>Euteleostomi</taxon>
        <taxon>Mammalia</taxon>
        <taxon>Eutheria</taxon>
        <taxon>Euarchontoglires</taxon>
        <taxon>Glires</taxon>
        <taxon>Rodentia</taxon>
        <taxon>Myomorpha</taxon>
        <taxon>Muroidea</taxon>
        <taxon>Muridae</taxon>
        <taxon>Murinae</taxon>
        <taxon>Mus</taxon>
        <taxon>Mus</taxon>
    </lineage>
</organism>
<name>UGPA_MOUSE</name>
<accession>Q91ZJ5</accession>
<accession>Q8R3D2</accession>
<reference key="1">
    <citation type="journal article" date="2002" name="BMC Genet.">
        <title>Comparative transcription map of the wobbler critical region on mouse chromosome 11 and the homologous region on human chromosome 2p13-14.</title>
        <authorList>
            <person name="Fuchs S."/>
            <person name="Resch K."/>
            <person name="Thiel C."/>
            <person name="Ulbrich M."/>
            <person name="Platzer M."/>
            <person name="Jockusch H."/>
            <person name="Schmitt-John T."/>
        </authorList>
    </citation>
    <scope>NUCLEOTIDE SEQUENCE</scope>
    <source>
        <strain>C57BL/6J</strain>
    </source>
</reference>
<reference key="2">
    <citation type="journal article" date="2005" name="Science">
        <title>The transcriptional landscape of the mammalian genome.</title>
        <authorList>
            <person name="Carninci P."/>
            <person name="Kasukawa T."/>
            <person name="Katayama S."/>
            <person name="Gough J."/>
            <person name="Frith M.C."/>
            <person name="Maeda N."/>
            <person name="Oyama R."/>
            <person name="Ravasi T."/>
            <person name="Lenhard B."/>
            <person name="Wells C."/>
            <person name="Kodzius R."/>
            <person name="Shimokawa K."/>
            <person name="Bajic V.B."/>
            <person name="Brenner S.E."/>
            <person name="Batalov S."/>
            <person name="Forrest A.R."/>
            <person name="Zavolan M."/>
            <person name="Davis M.J."/>
            <person name="Wilming L.G."/>
            <person name="Aidinis V."/>
            <person name="Allen J.E."/>
            <person name="Ambesi-Impiombato A."/>
            <person name="Apweiler R."/>
            <person name="Aturaliya R.N."/>
            <person name="Bailey T.L."/>
            <person name="Bansal M."/>
            <person name="Baxter L."/>
            <person name="Beisel K.W."/>
            <person name="Bersano T."/>
            <person name="Bono H."/>
            <person name="Chalk A.M."/>
            <person name="Chiu K.P."/>
            <person name="Choudhary V."/>
            <person name="Christoffels A."/>
            <person name="Clutterbuck D.R."/>
            <person name="Crowe M.L."/>
            <person name="Dalla E."/>
            <person name="Dalrymple B.P."/>
            <person name="de Bono B."/>
            <person name="Della Gatta G."/>
            <person name="di Bernardo D."/>
            <person name="Down T."/>
            <person name="Engstrom P."/>
            <person name="Fagiolini M."/>
            <person name="Faulkner G."/>
            <person name="Fletcher C.F."/>
            <person name="Fukushima T."/>
            <person name="Furuno M."/>
            <person name="Futaki S."/>
            <person name="Gariboldi M."/>
            <person name="Georgii-Hemming P."/>
            <person name="Gingeras T.R."/>
            <person name="Gojobori T."/>
            <person name="Green R.E."/>
            <person name="Gustincich S."/>
            <person name="Harbers M."/>
            <person name="Hayashi Y."/>
            <person name="Hensch T.K."/>
            <person name="Hirokawa N."/>
            <person name="Hill D."/>
            <person name="Huminiecki L."/>
            <person name="Iacono M."/>
            <person name="Ikeo K."/>
            <person name="Iwama A."/>
            <person name="Ishikawa T."/>
            <person name="Jakt M."/>
            <person name="Kanapin A."/>
            <person name="Katoh M."/>
            <person name="Kawasawa Y."/>
            <person name="Kelso J."/>
            <person name="Kitamura H."/>
            <person name="Kitano H."/>
            <person name="Kollias G."/>
            <person name="Krishnan S.P."/>
            <person name="Kruger A."/>
            <person name="Kummerfeld S.K."/>
            <person name="Kurochkin I.V."/>
            <person name="Lareau L.F."/>
            <person name="Lazarevic D."/>
            <person name="Lipovich L."/>
            <person name="Liu J."/>
            <person name="Liuni S."/>
            <person name="McWilliam S."/>
            <person name="Madan Babu M."/>
            <person name="Madera M."/>
            <person name="Marchionni L."/>
            <person name="Matsuda H."/>
            <person name="Matsuzawa S."/>
            <person name="Miki H."/>
            <person name="Mignone F."/>
            <person name="Miyake S."/>
            <person name="Morris K."/>
            <person name="Mottagui-Tabar S."/>
            <person name="Mulder N."/>
            <person name="Nakano N."/>
            <person name="Nakauchi H."/>
            <person name="Ng P."/>
            <person name="Nilsson R."/>
            <person name="Nishiguchi S."/>
            <person name="Nishikawa S."/>
            <person name="Nori F."/>
            <person name="Ohara O."/>
            <person name="Okazaki Y."/>
            <person name="Orlando V."/>
            <person name="Pang K.C."/>
            <person name="Pavan W.J."/>
            <person name="Pavesi G."/>
            <person name="Pesole G."/>
            <person name="Petrovsky N."/>
            <person name="Piazza S."/>
            <person name="Reed J."/>
            <person name="Reid J.F."/>
            <person name="Ring B.Z."/>
            <person name="Ringwald M."/>
            <person name="Rost B."/>
            <person name="Ruan Y."/>
            <person name="Salzberg S.L."/>
            <person name="Sandelin A."/>
            <person name="Schneider C."/>
            <person name="Schoenbach C."/>
            <person name="Sekiguchi K."/>
            <person name="Semple C.A."/>
            <person name="Seno S."/>
            <person name="Sessa L."/>
            <person name="Sheng Y."/>
            <person name="Shibata Y."/>
            <person name="Shimada H."/>
            <person name="Shimada K."/>
            <person name="Silva D."/>
            <person name="Sinclair B."/>
            <person name="Sperling S."/>
            <person name="Stupka E."/>
            <person name="Sugiura K."/>
            <person name="Sultana R."/>
            <person name="Takenaka Y."/>
            <person name="Taki K."/>
            <person name="Tammoja K."/>
            <person name="Tan S.L."/>
            <person name="Tang S."/>
            <person name="Taylor M.S."/>
            <person name="Tegner J."/>
            <person name="Teichmann S.A."/>
            <person name="Ueda H.R."/>
            <person name="van Nimwegen E."/>
            <person name="Verardo R."/>
            <person name="Wei C.L."/>
            <person name="Yagi K."/>
            <person name="Yamanishi H."/>
            <person name="Zabarovsky E."/>
            <person name="Zhu S."/>
            <person name="Zimmer A."/>
            <person name="Hide W."/>
            <person name="Bult C."/>
            <person name="Grimmond S.M."/>
            <person name="Teasdale R.D."/>
            <person name="Liu E.T."/>
            <person name="Brusic V."/>
            <person name="Quackenbush J."/>
            <person name="Wahlestedt C."/>
            <person name="Mattick J.S."/>
            <person name="Hume D.A."/>
            <person name="Kai C."/>
            <person name="Sasaki D."/>
            <person name="Tomaru Y."/>
            <person name="Fukuda S."/>
            <person name="Kanamori-Katayama M."/>
            <person name="Suzuki M."/>
            <person name="Aoki J."/>
            <person name="Arakawa T."/>
            <person name="Iida J."/>
            <person name="Imamura K."/>
            <person name="Itoh M."/>
            <person name="Kato T."/>
            <person name="Kawaji H."/>
            <person name="Kawagashira N."/>
            <person name="Kawashima T."/>
            <person name="Kojima M."/>
            <person name="Kondo S."/>
            <person name="Konno H."/>
            <person name="Nakano K."/>
            <person name="Ninomiya N."/>
            <person name="Nishio T."/>
            <person name="Okada M."/>
            <person name="Plessy C."/>
            <person name="Shibata K."/>
            <person name="Shiraki T."/>
            <person name="Suzuki S."/>
            <person name="Tagami M."/>
            <person name="Waki K."/>
            <person name="Watahiki A."/>
            <person name="Okamura-Oho Y."/>
            <person name="Suzuki H."/>
            <person name="Kawai J."/>
            <person name="Hayashizaki Y."/>
        </authorList>
    </citation>
    <scope>NUCLEOTIDE SEQUENCE [LARGE SCALE MRNA]</scope>
    <source>
        <strain>C57BL/6J</strain>
        <tissue>Colon</tissue>
    </source>
</reference>
<reference key="3">
    <citation type="journal article" date="2009" name="PLoS Biol.">
        <title>Lineage-specific biology revealed by a finished genome assembly of the mouse.</title>
        <authorList>
            <person name="Church D.M."/>
            <person name="Goodstadt L."/>
            <person name="Hillier L.W."/>
            <person name="Zody M.C."/>
            <person name="Goldstein S."/>
            <person name="She X."/>
            <person name="Bult C.J."/>
            <person name="Agarwala R."/>
            <person name="Cherry J.L."/>
            <person name="DiCuccio M."/>
            <person name="Hlavina W."/>
            <person name="Kapustin Y."/>
            <person name="Meric P."/>
            <person name="Maglott D."/>
            <person name="Birtle Z."/>
            <person name="Marques A.C."/>
            <person name="Graves T."/>
            <person name="Zhou S."/>
            <person name="Teague B."/>
            <person name="Potamousis K."/>
            <person name="Churas C."/>
            <person name="Place M."/>
            <person name="Herschleb J."/>
            <person name="Runnheim R."/>
            <person name="Forrest D."/>
            <person name="Amos-Landgraf J."/>
            <person name="Schwartz D.C."/>
            <person name="Cheng Z."/>
            <person name="Lindblad-Toh K."/>
            <person name="Eichler E.E."/>
            <person name="Ponting C.P."/>
        </authorList>
    </citation>
    <scope>NUCLEOTIDE SEQUENCE [LARGE SCALE GENOMIC DNA]</scope>
    <source>
        <strain>C57BL/6J</strain>
    </source>
</reference>
<reference key="4">
    <citation type="journal article" date="2004" name="Genome Res.">
        <title>The status, quality, and expansion of the NIH full-length cDNA project: the Mammalian Gene Collection (MGC).</title>
        <authorList>
            <consortium name="The MGC Project Team"/>
        </authorList>
    </citation>
    <scope>NUCLEOTIDE SEQUENCE [LARGE SCALE MRNA] (ISOFORMS 1 AND 2)</scope>
    <source>
        <strain>FVB/N</strain>
        <tissue>Mammary tumor</tissue>
        <tissue>Pituitary</tissue>
    </source>
</reference>
<reference key="5">
    <citation type="journal article" date="2010" name="Cell">
        <title>A tissue-specific atlas of mouse protein phosphorylation and expression.</title>
        <authorList>
            <person name="Huttlin E.L."/>
            <person name="Jedrychowski M.P."/>
            <person name="Elias J.E."/>
            <person name="Goswami T."/>
            <person name="Rad R."/>
            <person name="Beausoleil S.A."/>
            <person name="Villen J."/>
            <person name="Haas W."/>
            <person name="Sowa M.E."/>
            <person name="Gygi S.P."/>
        </authorList>
    </citation>
    <scope>PHOSPHORYLATION [LARGE SCALE ANALYSIS] AT SER-448</scope>
    <scope>IDENTIFICATION BY MASS SPECTROMETRY [LARGE SCALE ANALYSIS]</scope>
    <source>
        <tissue>Brain</tissue>
        <tissue>Brown adipose tissue</tissue>
        <tissue>Heart</tissue>
        <tissue>Kidney</tissue>
        <tissue>Liver</tissue>
        <tissue>Lung</tissue>
        <tissue>Pancreas</tissue>
        <tissue>Spleen</tissue>
        <tissue>Testis</tissue>
    </source>
</reference>
<comment type="function">
    <text evidence="2">UTP--glucose-1-phosphate uridylyltransferase catalyzing the conversion of glucose-1-phosphate into UDP-glucose, a crucial precursor for the production of glycogen.</text>
</comment>
<comment type="catalytic activity">
    <reaction evidence="2">
        <text>alpha-D-glucose 1-phosphate + UTP + H(+) = UDP-alpha-D-glucose + diphosphate</text>
        <dbReference type="Rhea" id="RHEA:19889"/>
        <dbReference type="ChEBI" id="CHEBI:15378"/>
        <dbReference type="ChEBI" id="CHEBI:33019"/>
        <dbReference type="ChEBI" id="CHEBI:46398"/>
        <dbReference type="ChEBI" id="CHEBI:58601"/>
        <dbReference type="ChEBI" id="CHEBI:58885"/>
        <dbReference type="EC" id="2.7.7.9"/>
    </reaction>
    <physiologicalReaction direction="left-to-right" evidence="2">
        <dbReference type="Rhea" id="RHEA:19890"/>
    </physiologicalReaction>
</comment>
<comment type="pathway">
    <text evidence="2">Glycan biosynthesis; glycogen biosynthesis.</text>
</comment>
<comment type="subunit">
    <text evidence="2">Homooctamer.</text>
</comment>
<comment type="subcellular location">
    <subcellularLocation>
        <location evidence="2">Cytoplasm</location>
    </subcellularLocation>
</comment>
<comment type="alternative products">
    <event type="alternative splicing"/>
    <isoform>
        <id>Q91ZJ5-1</id>
        <name>1</name>
        <sequence type="displayed"/>
    </isoform>
    <isoform>
        <id>Q91ZJ5-2</id>
        <name>2</name>
        <sequence type="described" ref="VSP_012835"/>
    </isoform>
</comment>
<comment type="similarity">
    <text evidence="5">Belongs to the UDPGP type 1 family.</text>
</comment>
<feature type="chain" id="PRO_0000185753" description="UTP--glucose-1-phosphate uridylyltransferase">
    <location>
        <begin position="1"/>
        <end position="508"/>
    </location>
</feature>
<feature type="region of interest" description="Oligomerization" evidence="1">
    <location>
        <begin position="457"/>
        <end position="508"/>
    </location>
</feature>
<feature type="region of interest" description="Critical for end-to-end subunit interaction" evidence="1">
    <location>
        <begin position="502"/>
        <end position="503"/>
    </location>
</feature>
<feature type="active site" evidence="1">
    <location>
        <position position="396"/>
    </location>
</feature>
<feature type="binding site" evidence="3">
    <location>
        <begin position="113"/>
        <end position="116"/>
    </location>
    <ligand>
        <name>UTP</name>
        <dbReference type="ChEBI" id="CHEBI:46398"/>
    </ligand>
</feature>
<feature type="binding site" evidence="2">
    <location>
        <begin position="115"/>
        <end position="116"/>
    </location>
    <ligand>
        <name>substrate</name>
    </ligand>
</feature>
<feature type="binding site" evidence="1">
    <location>
        <position position="127"/>
    </location>
    <ligand>
        <name>Mg(2+)</name>
        <dbReference type="ChEBI" id="CHEBI:18420"/>
    </ligand>
</feature>
<feature type="binding site" evidence="3">
    <location>
        <position position="127"/>
    </location>
    <ligand>
        <name>UTP</name>
        <dbReference type="ChEBI" id="CHEBI:46398"/>
    </ligand>
</feature>
<feature type="binding site" evidence="3">
    <location>
        <position position="190"/>
    </location>
    <ligand>
        <name>UTP</name>
        <dbReference type="ChEBI" id="CHEBI:46398"/>
    </ligand>
</feature>
<feature type="binding site" evidence="3">
    <location>
        <position position="222"/>
    </location>
    <ligand>
        <name>UTP</name>
        <dbReference type="ChEBI" id="CHEBI:46398"/>
    </ligand>
</feature>
<feature type="binding site" evidence="2">
    <location>
        <position position="223"/>
    </location>
    <ligand>
        <name>substrate</name>
    </ligand>
</feature>
<feature type="binding site" evidence="2">
    <location>
        <begin position="251"/>
        <end position="253"/>
    </location>
    <ligand>
        <name>substrate</name>
    </ligand>
</feature>
<feature type="binding site" evidence="1">
    <location>
        <position position="253"/>
    </location>
    <ligand>
        <name>Mg(2+)</name>
        <dbReference type="ChEBI" id="CHEBI:18420"/>
    </ligand>
</feature>
<feature type="binding site" evidence="3">
    <location>
        <position position="253"/>
    </location>
    <ligand>
        <name>UTP</name>
        <dbReference type="ChEBI" id="CHEBI:46398"/>
    </ligand>
</feature>
<feature type="binding site" evidence="3">
    <location>
        <position position="396"/>
    </location>
    <ligand>
        <name>UTP</name>
        <dbReference type="ChEBI" id="CHEBI:46398"/>
    </ligand>
</feature>
<feature type="modified residue" description="Phosphoserine" evidence="2">
    <location>
        <position position="13"/>
    </location>
</feature>
<feature type="modified residue" description="Phosphothreonine" evidence="2">
    <location>
        <position position="426"/>
    </location>
</feature>
<feature type="modified residue" description="Phosphoserine" evidence="2">
    <location>
        <position position="434"/>
    </location>
</feature>
<feature type="modified residue" description="N6-acetyllysine" evidence="2">
    <location>
        <position position="438"/>
    </location>
</feature>
<feature type="modified residue" description="Phosphoserine" evidence="6">
    <location>
        <position position="448"/>
    </location>
</feature>
<feature type="modified residue" description="Phosphoserine" evidence="2">
    <location>
        <position position="461"/>
    </location>
</feature>
<feature type="splice variant" id="VSP_012835" description="In isoform 2." evidence="4">
    <location>
        <begin position="1"/>
        <end position="11"/>
    </location>
</feature>
<evidence type="ECO:0000250" key="1"/>
<evidence type="ECO:0000250" key="2">
    <source>
        <dbReference type="UniProtKB" id="Q16851"/>
    </source>
</evidence>
<evidence type="ECO:0000250" key="3">
    <source>
        <dbReference type="UniProtKB" id="Q9M9P3"/>
    </source>
</evidence>
<evidence type="ECO:0000303" key="4">
    <source>
    </source>
</evidence>
<evidence type="ECO:0000305" key="5"/>
<evidence type="ECO:0007744" key="6">
    <source>
    </source>
</evidence>
<dbReference type="EC" id="2.7.7.9" evidence="2"/>
<dbReference type="EMBL" id="AF424698">
    <property type="protein sequence ID" value="AAL24807.1"/>
    <property type="molecule type" value="mRNA"/>
</dbReference>
<dbReference type="EMBL" id="AK033445">
    <property type="protein sequence ID" value="BAC28291.1"/>
    <property type="molecule type" value="mRNA"/>
</dbReference>
<dbReference type="EMBL" id="AL772195">
    <property type="status" value="NOT_ANNOTATED_CDS"/>
    <property type="molecule type" value="Genomic_DNA"/>
</dbReference>
<dbReference type="EMBL" id="AL833772">
    <property type="status" value="NOT_ANNOTATED_CDS"/>
    <property type="molecule type" value="Genomic_DNA"/>
</dbReference>
<dbReference type="EMBL" id="BC023810">
    <property type="protein sequence ID" value="AAH23810.1"/>
    <property type="molecule type" value="mRNA"/>
</dbReference>
<dbReference type="EMBL" id="BC025585">
    <property type="protein sequence ID" value="AAH25585.1"/>
    <property type="molecule type" value="mRNA"/>
</dbReference>
<dbReference type="EMBL" id="BC061208">
    <property type="protein sequence ID" value="AAH61208.1"/>
    <property type="molecule type" value="mRNA"/>
</dbReference>
<dbReference type="CCDS" id="CCDS24464.1">
    <molecule id="Q91ZJ5-1"/>
</dbReference>
<dbReference type="CCDS" id="CCDS70148.1">
    <molecule id="Q91ZJ5-2"/>
</dbReference>
<dbReference type="RefSeq" id="NP_001277563.1">
    <molecule id="Q91ZJ5-2"/>
    <property type="nucleotide sequence ID" value="NM_001290634.1"/>
</dbReference>
<dbReference type="RefSeq" id="NP_647458.1">
    <molecule id="Q91ZJ5-1"/>
    <property type="nucleotide sequence ID" value="NM_139297.6"/>
</dbReference>
<dbReference type="SMR" id="Q91ZJ5"/>
<dbReference type="BioGRID" id="229760">
    <property type="interactions" value="13"/>
</dbReference>
<dbReference type="FunCoup" id="Q91ZJ5">
    <property type="interactions" value="2211"/>
</dbReference>
<dbReference type="IntAct" id="Q91ZJ5">
    <property type="interactions" value="1"/>
</dbReference>
<dbReference type="STRING" id="10090.ENSMUSP00000099939"/>
<dbReference type="GlyGen" id="Q91ZJ5">
    <property type="glycosylation" value="2 sites, 1 N-linked glycan (1 site), 1 O-linked glycan (1 site)"/>
</dbReference>
<dbReference type="iPTMnet" id="Q91ZJ5"/>
<dbReference type="PhosphoSitePlus" id="Q91ZJ5"/>
<dbReference type="SwissPalm" id="Q91ZJ5"/>
<dbReference type="REPRODUCTION-2DPAGE" id="IPI00279474"/>
<dbReference type="jPOST" id="Q91ZJ5"/>
<dbReference type="PaxDb" id="10090-ENSMUSP00000099939"/>
<dbReference type="PeptideAtlas" id="Q91ZJ5"/>
<dbReference type="ProteomicsDB" id="299640">
    <molecule id="Q91ZJ5-1"/>
</dbReference>
<dbReference type="ProteomicsDB" id="299641">
    <molecule id="Q91ZJ5-2"/>
</dbReference>
<dbReference type="Pumba" id="Q91ZJ5"/>
<dbReference type="Antibodypedia" id="30782">
    <property type="antibodies" value="212 antibodies from 24 providers"/>
</dbReference>
<dbReference type="DNASU" id="216558"/>
<dbReference type="Ensembl" id="ENSMUST00000060895.6">
    <molecule id="Q91ZJ5-2"/>
    <property type="protein sequence ID" value="ENSMUSP00000056324.6"/>
    <property type="gene ID" value="ENSMUSG00000001891.17"/>
</dbReference>
<dbReference type="Ensembl" id="ENSMUST00000102875.11">
    <molecule id="Q91ZJ5-1"/>
    <property type="protein sequence ID" value="ENSMUSP00000099939.5"/>
    <property type="gene ID" value="ENSMUSG00000001891.17"/>
</dbReference>
<dbReference type="GeneID" id="216558"/>
<dbReference type="KEGG" id="mmu:216558"/>
<dbReference type="UCSC" id="uc007idr.4">
    <molecule id="Q91ZJ5-1"/>
    <property type="organism name" value="mouse"/>
</dbReference>
<dbReference type="AGR" id="MGI:2183447"/>
<dbReference type="CTD" id="7360"/>
<dbReference type="MGI" id="MGI:2183447">
    <property type="gene designation" value="Ugp2"/>
</dbReference>
<dbReference type="VEuPathDB" id="HostDB:ENSMUSG00000001891"/>
<dbReference type="eggNOG" id="KOG2638">
    <property type="taxonomic scope" value="Eukaryota"/>
</dbReference>
<dbReference type="GeneTree" id="ENSGT00940000153464"/>
<dbReference type="HOGENOM" id="CLU_023632_3_0_1"/>
<dbReference type="InParanoid" id="Q91ZJ5"/>
<dbReference type="OMA" id="KEYCFLS"/>
<dbReference type="OrthoDB" id="932129at2759"/>
<dbReference type="PhylomeDB" id="Q91ZJ5"/>
<dbReference type="TreeFam" id="TF300567"/>
<dbReference type="Reactome" id="R-MMU-173599">
    <property type="pathway name" value="Formation of the active cofactor, UDP-glucuronate"/>
</dbReference>
<dbReference type="Reactome" id="R-MMU-3322077">
    <property type="pathway name" value="Glycogen synthesis"/>
</dbReference>
<dbReference type="UniPathway" id="UPA00164"/>
<dbReference type="BioGRID-ORCS" id="216558">
    <property type="hits" value="21 hits in 82 CRISPR screens"/>
</dbReference>
<dbReference type="ChiTaRS" id="Ugp2">
    <property type="organism name" value="mouse"/>
</dbReference>
<dbReference type="PRO" id="PR:Q91ZJ5"/>
<dbReference type="Proteomes" id="UP000000589">
    <property type="component" value="Chromosome 11"/>
</dbReference>
<dbReference type="RNAct" id="Q91ZJ5">
    <property type="molecule type" value="protein"/>
</dbReference>
<dbReference type="Bgee" id="ENSMUSG00000001891">
    <property type="expression patterns" value="Expressed in muscle of arm and 261 other cell types or tissues"/>
</dbReference>
<dbReference type="ExpressionAtlas" id="Q91ZJ5">
    <property type="expression patterns" value="baseline and differential"/>
</dbReference>
<dbReference type="GO" id="GO:0005829">
    <property type="term" value="C:cytosol"/>
    <property type="evidence" value="ECO:0000266"/>
    <property type="project" value="MGI"/>
</dbReference>
<dbReference type="GO" id="GO:0005536">
    <property type="term" value="F:D-glucose binding"/>
    <property type="evidence" value="ECO:0007669"/>
    <property type="project" value="Ensembl"/>
</dbReference>
<dbReference type="GO" id="GO:0042802">
    <property type="term" value="F:identical protein binding"/>
    <property type="evidence" value="ECO:0007669"/>
    <property type="project" value="Ensembl"/>
</dbReference>
<dbReference type="GO" id="GO:0046872">
    <property type="term" value="F:metal ion binding"/>
    <property type="evidence" value="ECO:0007669"/>
    <property type="project" value="UniProtKB-KW"/>
</dbReference>
<dbReference type="GO" id="GO:0032557">
    <property type="term" value="F:pyrimidine ribonucleotide binding"/>
    <property type="evidence" value="ECO:0007669"/>
    <property type="project" value="Ensembl"/>
</dbReference>
<dbReference type="GO" id="GO:0051748">
    <property type="term" value="F:UTP-monosaccharide-1-phosphate uridylyltransferase activity"/>
    <property type="evidence" value="ECO:0000315"/>
    <property type="project" value="MGI"/>
</dbReference>
<dbReference type="GO" id="GO:0003983">
    <property type="term" value="F:UTP:glucose-1-phosphate uridylyltransferase activity"/>
    <property type="evidence" value="ECO:0000315"/>
    <property type="project" value="MGI"/>
</dbReference>
<dbReference type="GO" id="GO:0007420">
    <property type="term" value="P:brain development"/>
    <property type="evidence" value="ECO:0007669"/>
    <property type="project" value="Ensembl"/>
</dbReference>
<dbReference type="GO" id="GO:0019255">
    <property type="term" value="P:glucose 1-phosphate metabolic process"/>
    <property type="evidence" value="ECO:0007669"/>
    <property type="project" value="Ensembl"/>
</dbReference>
<dbReference type="GO" id="GO:0005978">
    <property type="term" value="P:glycogen biosynthetic process"/>
    <property type="evidence" value="ECO:0000315"/>
    <property type="project" value="MGI"/>
</dbReference>
<dbReference type="GO" id="GO:0006011">
    <property type="term" value="P:UDP-alpha-D-glucose metabolic process"/>
    <property type="evidence" value="ECO:0007669"/>
    <property type="project" value="Ensembl"/>
</dbReference>
<dbReference type="GO" id="GO:0006065">
    <property type="term" value="P:UDP-glucuronate biosynthetic process"/>
    <property type="evidence" value="ECO:0000315"/>
    <property type="project" value="MGI"/>
</dbReference>
<dbReference type="CDD" id="cd00897">
    <property type="entry name" value="UGPase_euk"/>
    <property type="match status" value="1"/>
</dbReference>
<dbReference type="FunFam" id="2.160.10.10:FF:000001">
    <property type="entry name" value="UTP--glucose-1-phosphate uridylyltransferase"/>
    <property type="match status" value="1"/>
</dbReference>
<dbReference type="FunFam" id="3.90.550.10:FF:000002">
    <property type="entry name" value="UTP--glucose-1-phosphate uridylyltransferase"/>
    <property type="match status" value="1"/>
</dbReference>
<dbReference type="Gene3D" id="2.160.10.10">
    <property type="entry name" value="Hexapeptide repeat proteins"/>
    <property type="match status" value="1"/>
</dbReference>
<dbReference type="Gene3D" id="3.90.550.10">
    <property type="entry name" value="Spore Coat Polysaccharide Biosynthesis Protein SpsA, Chain A"/>
    <property type="match status" value="1"/>
</dbReference>
<dbReference type="InterPro" id="IPR029044">
    <property type="entry name" value="Nucleotide-diphossugar_trans"/>
</dbReference>
<dbReference type="InterPro" id="IPR002618">
    <property type="entry name" value="UDPGP_fam"/>
</dbReference>
<dbReference type="InterPro" id="IPR016267">
    <property type="entry name" value="UDPGP_trans"/>
</dbReference>
<dbReference type="PANTHER" id="PTHR43511">
    <property type="match status" value="1"/>
</dbReference>
<dbReference type="Pfam" id="PF01704">
    <property type="entry name" value="UDPGP"/>
    <property type="match status" value="1"/>
</dbReference>
<dbReference type="PIRSF" id="PIRSF000806">
    <property type="entry name" value="UDPGP"/>
    <property type="match status" value="1"/>
</dbReference>
<dbReference type="SUPFAM" id="SSF53448">
    <property type="entry name" value="Nucleotide-diphospho-sugar transferases"/>
    <property type="match status" value="1"/>
</dbReference>
<proteinExistence type="evidence at protein level"/>
<protein>
    <recommendedName>
        <fullName>UTP--glucose-1-phosphate uridylyltransferase</fullName>
        <ecNumber evidence="2">2.7.7.9</ecNumber>
    </recommendedName>
    <alternativeName>
        <fullName>UDP-glucose pyrophosphorylase</fullName>
        <shortName>UDPGP</shortName>
        <shortName>UGPase</shortName>
    </alternativeName>
</protein>
<sequence>MSRFVQDLSKAMSQDGASQFQEVILQELELSVKKELEKILTTAASHEFEHTKKDLDGFRKLFHRFLQEKGPSVDWGKIQRPPEDSIQPYEKIKARGLPDNISSVLNKLVVVKLNGGLGTSMGCKGPKSLIGVRNENTFLDLTVQQIEHLNKTYNTDVPLVLMNSFNTDEDTKKILQKYNHCRVKIYTFNQSRYPRINKESLLPIAKDVSYSGENTEAWYPPGHGDIYASFYNSGLLDTFIEEGKEYIFVSNIDNLGATVDLYILNHLMNPPNGKRCEFVMEVTNKTRADVKGGTLTQYEGKLRLVEIAQVPKAHVDEFKSVSKFKIFNTNNLWISLGAVKRLQEQNAIDMEIIVNPKTLDGGLNVIQLETAVGAAIKSFENSLGINVPRSRFLPVKTTSDLLLVMSNLYSLNAGSLTMSEKREFPTVPLVKLGSSFTKVQDYLRRFESIPDMLELDHLTVSGDVTFGKNVSLKGTVIIIANHGDRIDIPPGAVLENKIVSGNLRILDH</sequence>
<keyword id="KW-0007">Acetylation</keyword>
<keyword id="KW-0025">Alternative splicing</keyword>
<keyword id="KW-0963">Cytoplasm</keyword>
<keyword id="KW-0460">Magnesium</keyword>
<keyword id="KW-0479">Metal-binding</keyword>
<keyword id="KW-0548">Nucleotidyltransferase</keyword>
<keyword id="KW-0597">Phosphoprotein</keyword>
<keyword id="KW-1185">Reference proteome</keyword>
<keyword id="KW-0808">Transferase</keyword>